<comment type="function">
    <text evidence="1">Catalyzes the conversion of D-ribulose 5-phosphate to formate and 3,4-dihydroxy-2-butanone 4-phosphate.</text>
</comment>
<comment type="catalytic activity">
    <reaction evidence="1">
        <text>D-ribulose 5-phosphate = (2S)-2-hydroxy-3-oxobutyl phosphate + formate + H(+)</text>
        <dbReference type="Rhea" id="RHEA:18457"/>
        <dbReference type="ChEBI" id="CHEBI:15378"/>
        <dbReference type="ChEBI" id="CHEBI:15740"/>
        <dbReference type="ChEBI" id="CHEBI:58121"/>
        <dbReference type="ChEBI" id="CHEBI:58830"/>
        <dbReference type="EC" id="4.1.99.12"/>
    </reaction>
</comment>
<comment type="cofactor">
    <cofactor evidence="1">
        <name>Mg(2+)</name>
        <dbReference type="ChEBI" id="CHEBI:18420"/>
    </cofactor>
    <cofactor evidence="1">
        <name>Mn(2+)</name>
        <dbReference type="ChEBI" id="CHEBI:29035"/>
    </cofactor>
    <text evidence="1">Binds 2 divalent metal cations per subunit. Magnesium or manganese.</text>
</comment>
<comment type="pathway">
    <text evidence="1">Cofactor biosynthesis; riboflavin biosynthesis; 2-hydroxy-3-oxobutyl phosphate from D-ribulose 5-phosphate: step 1/1.</text>
</comment>
<comment type="subunit">
    <text evidence="1">Homodimer.</text>
</comment>
<comment type="similarity">
    <text evidence="1">Belongs to the DHBP synthase family.</text>
</comment>
<accession>A5UDW2</accession>
<protein>
    <recommendedName>
        <fullName evidence="1">3,4-dihydroxy-2-butanone 4-phosphate synthase</fullName>
        <shortName evidence="1">DHBP synthase</shortName>
        <ecNumber evidence="1">4.1.99.12</ecNumber>
    </recommendedName>
</protein>
<sequence length="215" mass="23257">MNQSILSPFGNTAEERVLNAINAFKNGNGVLVLDDEDRENEGDLIFPAETITPEQMAKLIRYGSGIVCLCITDERCQQLDLPSMVEHNNSVNKTAFTVTIEAAKGVSTGVSAADRVTTIQTAIADNAVPTDLHRPGHVFPLRAANGGVLTRRGHTEASVDLARLAGFKEAGVICEITNDDGTMARTPDIVEFAKKFGYSVLTIEDLVEYRLAHNI</sequence>
<dbReference type="EC" id="4.1.99.12" evidence="1"/>
<dbReference type="EMBL" id="CP000671">
    <property type="protein sequence ID" value="ABQ98963.1"/>
    <property type="molecule type" value="Genomic_DNA"/>
</dbReference>
<dbReference type="SMR" id="A5UDW2"/>
<dbReference type="KEGG" id="hip:CGSHiEE_08270"/>
<dbReference type="HOGENOM" id="CLU_020273_3_0_6"/>
<dbReference type="UniPathway" id="UPA00275">
    <property type="reaction ID" value="UER00399"/>
</dbReference>
<dbReference type="GO" id="GO:0005829">
    <property type="term" value="C:cytosol"/>
    <property type="evidence" value="ECO:0007669"/>
    <property type="project" value="TreeGrafter"/>
</dbReference>
<dbReference type="GO" id="GO:0008686">
    <property type="term" value="F:3,4-dihydroxy-2-butanone-4-phosphate synthase activity"/>
    <property type="evidence" value="ECO:0007669"/>
    <property type="project" value="UniProtKB-UniRule"/>
</dbReference>
<dbReference type="GO" id="GO:0000287">
    <property type="term" value="F:magnesium ion binding"/>
    <property type="evidence" value="ECO:0007669"/>
    <property type="project" value="UniProtKB-UniRule"/>
</dbReference>
<dbReference type="GO" id="GO:0030145">
    <property type="term" value="F:manganese ion binding"/>
    <property type="evidence" value="ECO:0007669"/>
    <property type="project" value="UniProtKB-UniRule"/>
</dbReference>
<dbReference type="GO" id="GO:0009231">
    <property type="term" value="P:riboflavin biosynthetic process"/>
    <property type="evidence" value="ECO:0007669"/>
    <property type="project" value="UniProtKB-UniRule"/>
</dbReference>
<dbReference type="FunFam" id="3.90.870.10:FF:000002">
    <property type="entry name" value="3,4-dihydroxy-2-butanone 4-phosphate synthase"/>
    <property type="match status" value="1"/>
</dbReference>
<dbReference type="Gene3D" id="3.90.870.10">
    <property type="entry name" value="DHBP synthase"/>
    <property type="match status" value="1"/>
</dbReference>
<dbReference type="HAMAP" id="MF_00180">
    <property type="entry name" value="RibB"/>
    <property type="match status" value="1"/>
</dbReference>
<dbReference type="InterPro" id="IPR017945">
    <property type="entry name" value="DHBP_synth_RibB-like_a/b_dom"/>
</dbReference>
<dbReference type="InterPro" id="IPR000422">
    <property type="entry name" value="DHBP_synthase_RibB"/>
</dbReference>
<dbReference type="NCBIfam" id="TIGR00506">
    <property type="entry name" value="ribB"/>
    <property type="match status" value="1"/>
</dbReference>
<dbReference type="PANTHER" id="PTHR21327:SF38">
    <property type="entry name" value="3,4-DIHYDROXY-2-BUTANONE 4-PHOSPHATE SYNTHASE"/>
    <property type="match status" value="1"/>
</dbReference>
<dbReference type="PANTHER" id="PTHR21327">
    <property type="entry name" value="GTP CYCLOHYDROLASE II-RELATED"/>
    <property type="match status" value="1"/>
</dbReference>
<dbReference type="Pfam" id="PF00926">
    <property type="entry name" value="DHBP_synthase"/>
    <property type="match status" value="1"/>
</dbReference>
<dbReference type="SUPFAM" id="SSF55821">
    <property type="entry name" value="YrdC/RibB"/>
    <property type="match status" value="1"/>
</dbReference>
<name>RIBB_HAEIE</name>
<feature type="chain" id="PRO_1000040611" description="3,4-dihydroxy-2-butanone 4-phosphate synthase">
    <location>
        <begin position="1"/>
        <end position="215"/>
    </location>
</feature>
<feature type="binding site" evidence="1">
    <location>
        <begin position="38"/>
        <end position="39"/>
    </location>
    <ligand>
        <name>D-ribulose 5-phosphate</name>
        <dbReference type="ChEBI" id="CHEBI:58121"/>
    </ligand>
</feature>
<feature type="binding site" evidence="1">
    <location>
        <position position="39"/>
    </location>
    <ligand>
        <name>Mg(2+)</name>
        <dbReference type="ChEBI" id="CHEBI:18420"/>
        <label>1</label>
    </ligand>
</feature>
<feature type="binding site" evidence="1">
    <location>
        <position position="39"/>
    </location>
    <ligand>
        <name>Mg(2+)</name>
        <dbReference type="ChEBI" id="CHEBI:18420"/>
        <label>2</label>
    </ligand>
</feature>
<feature type="binding site" evidence="1">
    <location>
        <position position="43"/>
    </location>
    <ligand>
        <name>D-ribulose 5-phosphate</name>
        <dbReference type="ChEBI" id="CHEBI:58121"/>
    </ligand>
</feature>
<feature type="binding site" evidence="1">
    <location>
        <begin position="151"/>
        <end position="155"/>
    </location>
    <ligand>
        <name>D-ribulose 5-phosphate</name>
        <dbReference type="ChEBI" id="CHEBI:58121"/>
    </ligand>
</feature>
<feature type="binding site" evidence="1">
    <location>
        <position position="154"/>
    </location>
    <ligand>
        <name>Mg(2+)</name>
        <dbReference type="ChEBI" id="CHEBI:18420"/>
        <label>2</label>
    </ligand>
</feature>
<feature type="binding site" evidence="1">
    <location>
        <position position="175"/>
    </location>
    <ligand>
        <name>D-ribulose 5-phosphate</name>
        <dbReference type="ChEBI" id="CHEBI:58121"/>
    </ligand>
</feature>
<feature type="site" description="Essential for catalytic activity" evidence="1">
    <location>
        <position position="137"/>
    </location>
</feature>
<feature type="site" description="Essential for catalytic activity" evidence="1">
    <location>
        <position position="175"/>
    </location>
</feature>
<gene>
    <name evidence="1" type="primary">ribB</name>
    <name type="ordered locus">CGSHiEE_08270</name>
</gene>
<keyword id="KW-0456">Lyase</keyword>
<keyword id="KW-0460">Magnesium</keyword>
<keyword id="KW-0464">Manganese</keyword>
<keyword id="KW-0479">Metal-binding</keyword>
<keyword id="KW-0686">Riboflavin biosynthesis</keyword>
<evidence type="ECO:0000255" key="1">
    <source>
        <dbReference type="HAMAP-Rule" id="MF_00180"/>
    </source>
</evidence>
<organism>
    <name type="scientific">Haemophilus influenzae (strain PittEE)</name>
    <dbReference type="NCBI Taxonomy" id="374930"/>
    <lineage>
        <taxon>Bacteria</taxon>
        <taxon>Pseudomonadati</taxon>
        <taxon>Pseudomonadota</taxon>
        <taxon>Gammaproteobacteria</taxon>
        <taxon>Pasteurellales</taxon>
        <taxon>Pasteurellaceae</taxon>
        <taxon>Haemophilus</taxon>
    </lineage>
</organism>
<reference key="1">
    <citation type="journal article" date="2007" name="Genome Biol.">
        <title>Characterization and modeling of the Haemophilus influenzae core and supragenomes based on the complete genomic sequences of Rd and 12 clinical nontypeable strains.</title>
        <authorList>
            <person name="Hogg J.S."/>
            <person name="Hu F.Z."/>
            <person name="Janto B."/>
            <person name="Boissy R."/>
            <person name="Hayes J."/>
            <person name="Keefe R."/>
            <person name="Post J.C."/>
            <person name="Ehrlich G.D."/>
        </authorList>
    </citation>
    <scope>NUCLEOTIDE SEQUENCE [LARGE SCALE GENOMIC DNA]</scope>
    <source>
        <strain>PittEE</strain>
    </source>
</reference>
<proteinExistence type="inferred from homology"/>